<proteinExistence type="inferred from homology"/>
<keyword id="KW-0066">ATP synthesis</keyword>
<keyword id="KW-0138">CF(0)</keyword>
<keyword id="KW-0375">Hydrogen ion transport</keyword>
<keyword id="KW-0406">Ion transport</keyword>
<keyword id="KW-0472">Membrane</keyword>
<keyword id="KW-0793">Thylakoid</keyword>
<keyword id="KW-0812">Transmembrane</keyword>
<keyword id="KW-1133">Transmembrane helix</keyword>
<keyword id="KW-0813">Transport</keyword>
<reference key="1">
    <citation type="journal article" date="1993" name="Biochem. J.">
        <title>Organization and sequences of genes for the subunits of ATP synthase in the thermophilic cyanobacterium Synechococcus 6716.</title>
        <authorList>
            <person name="van Walraven H.S."/>
            <person name="Lutter R."/>
            <person name="Walker J.E."/>
        </authorList>
    </citation>
    <scope>NUCLEOTIDE SEQUENCE [GENOMIC DNA]</scope>
</reference>
<feature type="chain" id="PRO_0000082428" description="ATP synthase subunit b'">
    <location>
        <begin position="1"/>
        <end position="159"/>
    </location>
</feature>
<feature type="transmembrane region" description="Helical" evidence="1">
    <location>
        <begin position="27"/>
        <end position="47"/>
    </location>
</feature>
<evidence type="ECO:0000255" key="1">
    <source>
        <dbReference type="HAMAP-Rule" id="MF_01399"/>
    </source>
</evidence>
<protein>
    <recommendedName>
        <fullName evidence="1">ATP synthase subunit b'</fullName>
    </recommendedName>
    <alternativeName>
        <fullName evidence="1">ATP synthase F(0) sector subunit b'</fullName>
    </alternativeName>
    <alternativeName>
        <fullName evidence="1">ATPase subunit II</fullName>
    </alternativeName>
    <alternativeName>
        <fullName evidence="1">F-type ATPase subunit b'</fullName>
        <shortName evidence="1">F-ATPase subunit b'</shortName>
    </alternativeName>
</protein>
<accession>Q05367</accession>
<sequence length="159" mass="17920">MVGKASYVRFPLLFRPILERLMFDFDATLPLMAVQFLILTVILNALLYKPLGQALDNRDEYIRTNLQQAKERLQQATELANQYEQELAYTRREAQAIIEEARAEAQKIATAEIAAAQQALQAELMKAQAEIDQQKQATLQALEGQVSSLSEQLLAKLLA</sequence>
<comment type="function">
    <text evidence="1">F(1)F(0) ATP synthase produces ATP from ADP in the presence of a proton or sodium gradient. F-type ATPases consist of two structural domains, F(1) containing the extramembraneous catalytic core and F(0) containing the membrane proton channel, linked together by a central stalk and a peripheral stalk. During catalysis, ATP synthesis in the catalytic domain of F(1) is coupled via a rotary mechanism of the central stalk subunits to proton translocation.</text>
</comment>
<comment type="function">
    <text evidence="1">Component of the F(0) channel, it forms part of the peripheral stalk, linking F(1) to F(0). The b'-subunit is a diverged and duplicated form of b found in plants and photosynthetic bacteria.</text>
</comment>
<comment type="subunit">
    <text evidence="1">F-type ATPases have 2 components, F(1) - the catalytic core - and F(0) - the membrane proton channel. F(1) has five subunits: alpha(3), beta(3), gamma(1), delta(1), epsilon(1). F(0) has four main subunits: a(1), b(1), b'(1) and c(10-14). The alpha and beta chains form an alternating ring which encloses part of the gamma chain. F(1) is attached to F(0) by a central stalk formed by the gamma and epsilon chains, while a peripheral stalk is formed by the delta, b and b' chains.</text>
</comment>
<comment type="subcellular location">
    <subcellularLocation>
        <location evidence="1">Cellular thylakoid membrane</location>
        <topology evidence="1">Single-pass membrane protein</topology>
    </subcellularLocation>
</comment>
<comment type="similarity">
    <text evidence="1">Belongs to the ATPase B chain family.</text>
</comment>
<gene>
    <name evidence="1" type="primary">atpF2</name>
    <name evidence="1" type="synonym">atpG</name>
</gene>
<organism>
    <name type="scientific">Synechococcus sp. (strain PCC 6716)</name>
    <dbReference type="NCBI Taxonomy" id="32048"/>
    <lineage>
        <taxon>Bacteria</taxon>
        <taxon>Bacillati</taxon>
        <taxon>Cyanobacteriota</taxon>
        <taxon>Cyanophyceae</taxon>
        <taxon>Synechococcales</taxon>
        <taxon>Synechococcaceae</taxon>
        <taxon>Synechococcus</taxon>
    </lineage>
</organism>
<dbReference type="EMBL" id="X70431">
    <property type="protein sequence ID" value="CAA49872.1"/>
    <property type="molecule type" value="Genomic_DNA"/>
</dbReference>
<dbReference type="SMR" id="Q05367"/>
<dbReference type="GO" id="GO:0031676">
    <property type="term" value="C:plasma membrane-derived thylakoid membrane"/>
    <property type="evidence" value="ECO:0007669"/>
    <property type="project" value="UniProtKB-SubCell"/>
</dbReference>
<dbReference type="GO" id="GO:0045259">
    <property type="term" value="C:proton-transporting ATP synthase complex"/>
    <property type="evidence" value="ECO:0007669"/>
    <property type="project" value="UniProtKB-KW"/>
</dbReference>
<dbReference type="GO" id="GO:0046933">
    <property type="term" value="F:proton-transporting ATP synthase activity, rotational mechanism"/>
    <property type="evidence" value="ECO:0007669"/>
    <property type="project" value="UniProtKB-UniRule"/>
</dbReference>
<dbReference type="GO" id="GO:0046961">
    <property type="term" value="F:proton-transporting ATPase activity, rotational mechanism"/>
    <property type="evidence" value="ECO:0007669"/>
    <property type="project" value="TreeGrafter"/>
</dbReference>
<dbReference type="CDD" id="cd06503">
    <property type="entry name" value="ATP-synt_Fo_b"/>
    <property type="match status" value="1"/>
</dbReference>
<dbReference type="HAMAP" id="MF_01398">
    <property type="entry name" value="ATP_synth_b_bprime"/>
    <property type="match status" value="1"/>
</dbReference>
<dbReference type="HAMAP" id="MF_01399">
    <property type="entry name" value="ATP_synth_bprime"/>
    <property type="match status" value="1"/>
</dbReference>
<dbReference type="InterPro" id="IPR034679">
    <property type="entry name" value="ATP_synth_b"/>
</dbReference>
<dbReference type="InterPro" id="IPR002146">
    <property type="entry name" value="ATP_synth_b/b'su_bac/chlpt"/>
</dbReference>
<dbReference type="InterPro" id="IPR050059">
    <property type="entry name" value="ATP_synthase_B_chain"/>
</dbReference>
<dbReference type="NCBIfam" id="NF005607">
    <property type="entry name" value="PRK07353.1"/>
    <property type="match status" value="1"/>
</dbReference>
<dbReference type="PANTHER" id="PTHR33445">
    <property type="entry name" value="ATP SYNTHASE SUBUNIT B', CHLOROPLASTIC"/>
    <property type="match status" value="1"/>
</dbReference>
<dbReference type="PANTHER" id="PTHR33445:SF2">
    <property type="entry name" value="ATP SYNTHASE SUBUNIT B', CHLOROPLASTIC"/>
    <property type="match status" value="1"/>
</dbReference>
<dbReference type="Pfam" id="PF00430">
    <property type="entry name" value="ATP-synt_B"/>
    <property type="match status" value="1"/>
</dbReference>
<name>ATPF2_SYNP1</name>